<feature type="chain" id="PRO_0000375949" description="Envelope glycoprotein M">
    <location>
        <begin position="1"/>
        <end position="405"/>
    </location>
</feature>
<feature type="topological domain" description="Intravirion" evidence="1">
    <location>
        <begin position="1"/>
        <end position="17"/>
    </location>
</feature>
<feature type="transmembrane region" description="Helical" evidence="1">
    <location>
        <begin position="18"/>
        <end position="38"/>
    </location>
</feature>
<feature type="topological domain" description="Virion surface" evidence="1">
    <location>
        <begin position="39"/>
        <end position="76"/>
    </location>
</feature>
<feature type="transmembrane region" description="Helical" evidence="1">
    <location>
        <begin position="77"/>
        <end position="97"/>
    </location>
</feature>
<feature type="topological domain" description="Intravirion" evidence="1">
    <location>
        <begin position="98"/>
        <end position="121"/>
    </location>
</feature>
<feature type="transmembrane region" description="Helical" evidence="1">
    <location>
        <begin position="122"/>
        <end position="142"/>
    </location>
</feature>
<feature type="topological domain" description="Virion surface" evidence="1">
    <location>
        <begin position="143"/>
        <end position="149"/>
    </location>
</feature>
<feature type="transmembrane region" description="Helical" evidence="1">
    <location>
        <begin position="150"/>
        <end position="170"/>
    </location>
</feature>
<feature type="topological domain" description="Intravirion" evidence="1">
    <location>
        <begin position="171"/>
        <end position="192"/>
    </location>
</feature>
<feature type="transmembrane region" description="Helical" evidence="1">
    <location>
        <begin position="193"/>
        <end position="215"/>
    </location>
</feature>
<feature type="topological domain" description="Virion surface" evidence="1">
    <location>
        <begin position="216"/>
        <end position="245"/>
    </location>
</feature>
<feature type="transmembrane region" description="Helical" evidence="1">
    <location>
        <begin position="246"/>
        <end position="266"/>
    </location>
</feature>
<feature type="topological domain" description="Intravirion" evidence="1">
    <location>
        <position position="267"/>
    </location>
</feature>
<feature type="transmembrane region" description="Helical" evidence="1">
    <location>
        <begin position="268"/>
        <end position="288"/>
    </location>
</feature>
<feature type="topological domain" description="Virion surface" evidence="1">
    <location>
        <begin position="289"/>
        <end position="299"/>
    </location>
</feature>
<feature type="transmembrane region" description="Helical" evidence="1">
    <location>
        <begin position="300"/>
        <end position="320"/>
    </location>
</feature>
<feature type="topological domain" description="Intravirion" evidence="1">
    <location>
        <begin position="321"/>
        <end position="405"/>
    </location>
</feature>
<feature type="region of interest" description="Disordered" evidence="2">
    <location>
        <begin position="346"/>
        <end position="405"/>
    </location>
</feature>
<feature type="compositionally biased region" description="Polar residues" evidence="2">
    <location>
        <begin position="386"/>
        <end position="397"/>
    </location>
</feature>
<feature type="disulfide bond" description="Interchain (with gN)" evidence="1">
    <location>
        <position position="44"/>
    </location>
</feature>
<organism>
    <name type="scientific">Epstein-Barr virus (strain GD1)</name>
    <name type="common">HHV-4</name>
    <name type="synonym">Human gammaherpesvirus 4</name>
    <dbReference type="NCBI Taxonomy" id="10376"/>
    <lineage>
        <taxon>Viruses</taxon>
        <taxon>Duplodnaviria</taxon>
        <taxon>Heunggongvirae</taxon>
        <taxon>Peploviricota</taxon>
        <taxon>Herviviricetes</taxon>
        <taxon>Herpesvirales</taxon>
        <taxon>Orthoherpesviridae</taxon>
        <taxon>Gammaherpesvirinae</taxon>
        <taxon>Lymphocryptovirus</taxon>
        <taxon>Lymphocryptovirus humangamma4</taxon>
    </lineage>
</organism>
<sequence>MKSSKNDTFVYRTWVKTLVVYFVMFVMSAVVPITAMFPNLGYPCYFNALVDYGALNLTNYNLAHHLTPTLYLEPPEMFVYITLVFIADCVAFIYYACGEVALIKARKKVSGLTDLSAWVSAVGSPTVLFLAILKLWSIQVFIQVLSYKHVFLSAFVYFLHFLASVLHACACVTRFSPVWVVKAQDNSIPQDTFLWWVVFYLKPVVTNLYLGCLALETLVFSLSVFLALGNSFYFMVGDMVLGAVNLFLILPIFWYILTEVWLASFMRHNFGFYCGMFIASIILILPLVRYEAVFVSAKLHTTVAINVAIIPILCSVAMLIRICRIFKSMRQGTDYVPVSETVELELESEPRPRPSRTPSPGRNRRRSSTSSSSSRSTRRQRPVSTQALVSSVLPMTTDSEEEIFP</sequence>
<gene>
    <name evidence="1" type="primary">gM</name>
    <name type="ORF">BBRF3</name>
</gene>
<dbReference type="EMBL" id="AY961628">
    <property type="protein sequence ID" value="AAY41132.1"/>
    <property type="molecule type" value="Genomic_DNA"/>
</dbReference>
<dbReference type="SMR" id="Q3KSR7"/>
<dbReference type="IntAct" id="Q3KSR7">
    <property type="interactions" value="8"/>
</dbReference>
<dbReference type="MINT" id="Q3KSR7"/>
<dbReference type="Proteomes" id="UP000007641">
    <property type="component" value="Genome"/>
</dbReference>
<dbReference type="GO" id="GO:0044175">
    <property type="term" value="C:host cell endosome membrane"/>
    <property type="evidence" value="ECO:0007669"/>
    <property type="project" value="UniProtKB-SubCell"/>
</dbReference>
<dbReference type="GO" id="GO:0044177">
    <property type="term" value="C:host cell Golgi apparatus"/>
    <property type="evidence" value="ECO:0007669"/>
    <property type="project" value="UniProtKB-SubCell"/>
</dbReference>
<dbReference type="GO" id="GO:0044201">
    <property type="term" value="C:host cell nuclear inner membrane"/>
    <property type="evidence" value="ECO:0007669"/>
    <property type="project" value="UniProtKB-SubCell"/>
</dbReference>
<dbReference type="GO" id="GO:0016020">
    <property type="term" value="C:membrane"/>
    <property type="evidence" value="ECO:0007669"/>
    <property type="project" value="UniProtKB-KW"/>
</dbReference>
<dbReference type="GO" id="GO:0019031">
    <property type="term" value="C:viral envelope"/>
    <property type="evidence" value="ECO:0007669"/>
    <property type="project" value="UniProtKB-KW"/>
</dbReference>
<dbReference type="GO" id="GO:0055036">
    <property type="term" value="C:virion membrane"/>
    <property type="evidence" value="ECO:0007669"/>
    <property type="project" value="UniProtKB-SubCell"/>
</dbReference>
<dbReference type="HAMAP" id="MF_04035">
    <property type="entry name" value="HSV_GM"/>
    <property type="match status" value="1"/>
</dbReference>
<dbReference type="InterPro" id="IPR000785">
    <property type="entry name" value="Herpes_glycop_M"/>
</dbReference>
<dbReference type="Pfam" id="PF01528">
    <property type="entry name" value="Herpes_glycop"/>
    <property type="match status" value="1"/>
</dbReference>
<dbReference type="PRINTS" id="PR00333">
    <property type="entry name" value="HSVINTEGRLMP"/>
</dbReference>
<proteinExistence type="inferred from homology"/>
<protein>
    <recommendedName>
        <fullName evidence="1">Envelope glycoprotein M</fullName>
        <shortName evidence="1">gM</shortName>
    </recommendedName>
</protein>
<reference key="1">
    <citation type="journal article" date="2005" name="J. Virol.">
        <title>Genomic sequence analysis of Epstein-Barr virus strain GD1 from a nasopharyngeal carcinoma patient.</title>
        <authorList>
            <person name="Zeng M.-S."/>
            <person name="Li D.-J."/>
            <person name="Liu Q.-L."/>
            <person name="Song L.-B."/>
            <person name="Li M.-Z."/>
            <person name="Zhang R.-H."/>
            <person name="Yu X.-J."/>
            <person name="Wang H.-M."/>
            <person name="Ernberg I."/>
            <person name="Zeng Y.-X."/>
        </authorList>
    </citation>
    <scope>NUCLEOTIDE SEQUENCE [LARGE SCALE GENOMIC DNA]</scope>
</reference>
<keyword id="KW-1015">Disulfide bond</keyword>
<keyword id="KW-0325">Glycoprotein</keyword>
<keyword id="KW-1039">Host endosome</keyword>
<keyword id="KW-1040">Host Golgi apparatus</keyword>
<keyword id="KW-1043">Host membrane</keyword>
<keyword id="KW-1048">Host nucleus</keyword>
<keyword id="KW-0472">Membrane</keyword>
<keyword id="KW-0812">Transmembrane</keyword>
<keyword id="KW-1133">Transmembrane helix</keyword>
<keyword id="KW-0261">Viral envelope protein</keyword>
<keyword id="KW-0946">Virion</keyword>
<evidence type="ECO:0000255" key="1">
    <source>
        <dbReference type="HAMAP-Rule" id="MF_04035"/>
    </source>
</evidence>
<evidence type="ECO:0000256" key="2">
    <source>
        <dbReference type="SAM" id="MobiDB-lite"/>
    </source>
</evidence>
<accession>Q3KSR7</accession>
<name>GM_EBVG</name>
<comment type="function">
    <text evidence="1">Envelope glycoprotein important for virion assembly and egress. Plays a role in the correct incorporation of gH-gL into virion membrane. Directs the glycoprotein N (gN) to the host trans-Golgi network.</text>
</comment>
<comment type="subunit">
    <text evidence="1">Interacts (via N-terminus) with gN (via N-terminus). The gM-gN heterodimer forms the gCII complex.</text>
</comment>
<comment type="subcellular location">
    <subcellularLocation>
        <location evidence="1">Virion membrane</location>
        <topology evidence="1">Multi-pass membrane protein</topology>
    </subcellularLocation>
    <subcellularLocation>
        <location evidence="1">Host Golgi apparatus</location>
        <location evidence="1">Host trans-Golgi network</location>
    </subcellularLocation>
    <subcellularLocation>
        <location evidence="1">Host endosome membrane</location>
        <topology evidence="1">Multi-pass membrane protein</topology>
    </subcellularLocation>
    <subcellularLocation>
        <location evidence="1">Host nucleus inner membrane</location>
        <topology evidence="1">Multi-pass membrane protein</topology>
    </subcellularLocation>
    <text evidence="1">During virion morphogenesis, this protein accumulates in the trans-Golgi network where secondary envelopment occurs.</text>
</comment>
<comment type="similarity">
    <text evidence="1">Belongs to the herpesviridae glycoprotein M family.</text>
</comment>
<organismHost>
    <name type="scientific">Homo sapiens</name>
    <name type="common">Human</name>
    <dbReference type="NCBI Taxonomy" id="9606"/>
</organismHost>